<keyword id="KW-1185">Reference proteome</keyword>
<keyword id="KW-0687">Ribonucleoprotein</keyword>
<keyword id="KW-0689">Ribosomal protein</keyword>
<gene>
    <name evidence="1" type="primary">rpmA</name>
    <name type="ordered locus">HH_0009</name>
</gene>
<protein>
    <recommendedName>
        <fullName evidence="1">Large ribosomal subunit protein bL27</fullName>
    </recommendedName>
    <alternativeName>
        <fullName evidence="3">50S ribosomal protein L27</fullName>
    </alternativeName>
</protein>
<comment type="similarity">
    <text evidence="1">Belongs to the bacterial ribosomal protein bL27 family.</text>
</comment>
<proteinExistence type="inferred from homology"/>
<reference key="1">
    <citation type="journal article" date="2003" name="Proc. Natl. Acad. Sci. U.S.A.">
        <title>The complete genome sequence of the carcinogenic bacterium Helicobacter hepaticus.</title>
        <authorList>
            <person name="Suerbaum S."/>
            <person name="Josenhans C."/>
            <person name="Sterzenbach T."/>
            <person name="Drescher B."/>
            <person name="Brandt P."/>
            <person name="Bell M."/>
            <person name="Droege M."/>
            <person name="Fartmann B."/>
            <person name="Fischer H.-P."/>
            <person name="Ge Z."/>
            <person name="Hoerster A."/>
            <person name="Holland R."/>
            <person name="Klein K."/>
            <person name="Koenig J."/>
            <person name="Macko L."/>
            <person name="Mendz G.L."/>
            <person name="Nyakatura G."/>
            <person name="Schauer D.B."/>
            <person name="Shen Z."/>
            <person name="Weber J."/>
            <person name="Frosch M."/>
            <person name="Fox J.G."/>
        </authorList>
    </citation>
    <scope>NUCLEOTIDE SEQUENCE [LARGE SCALE GENOMIC DNA]</scope>
    <source>
        <strain>ATCC 51449 / 3B1</strain>
    </source>
</reference>
<dbReference type="EMBL" id="AE017125">
    <property type="protein sequence ID" value="AAP76606.1"/>
    <property type="molecule type" value="Genomic_DNA"/>
</dbReference>
<dbReference type="RefSeq" id="WP_011114852.1">
    <property type="nucleotide sequence ID" value="NC_004917.1"/>
</dbReference>
<dbReference type="SMR" id="Q7VK83"/>
<dbReference type="STRING" id="235279.HH_0009"/>
<dbReference type="KEGG" id="hhe:HH_0009"/>
<dbReference type="eggNOG" id="COG0211">
    <property type="taxonomic scope" value="Bacteria"/>
</dbReference>
<dbReference type="HOGENOM" id="CLU_095424_4_0_7"/>
<dbReference type="OrthoDB" id="9803474at2"/>
<dbReference type="Proteomes" id="UP000002495">
    <property type="component" value="Chromosome"/>
</dbReference>
<dbReference type="GO" id="GO:0022625">
    <property type="term" value="C:cytosolic large ribosomal subunit"/>
    <property type="evidence" value="ECO:0007669"/>
    <property type="project" value="TreeGrafter"/>
</dbReference>
<dbReference type="GO" id="GO:0003735">
    <property type="term" value="F:structural constituent of ribosome"/>
    <property type="evidence" value="ECO:0007669"/>
    <property type="project" value="InterPro"/>
</dbReference>
<dbReference type="GO" id="GO:0006412">
    <property type="term" value="P:translation"/>
    <property type="evidence" value="ECO:0007669"/>
    <property type="project" value="UniProtKB-UniRule"/>
</dbReference>
<dbReference type="FunFam" id="2.40.50.100:FF:000026">
    <property type="entry name" value="50S ribosomal protein L27"/>
    <property type="match status" value="1"/>
</dbReference>
<dbReference type="Gene3D" id="2.40.50.100">
    <property type="match status" value="1"/>
</dbReference>
<dbReference type="HAMAP" id="MF_00539">
    <property type="entry name" value="Ribosomal_bL27"/>
    <property type="match status" value="1"/>
</dbReference>
<dbReference type="InterPro" id="IPR001684">
    <property type="entry name" value="Ribosomal_bL27"/>
</dbReference>
<dbReference type="InterPro" id="IPR018261">
    <property type="entry name" value="Ribosomal_bL27_CS"/>
</dbReference>
<dbReference type="NCBIfam" id="TIGR00062">
    <property type="entry name" value="L27"/>
    <property type="match status" value="1"/>
</dbReference>
<dbReference type="PANTHER" id="PTHR15893:SF0">
    <property type="entry name" value="LARGE RIBOSOMAL SUBUNIT PROTEIN BL27M"/>
    <property type="match status" value="1"/>
</dbReference>
<dbReference type="PANTHER" id="PTHR15893">
    <property type="entry name" value="RIBOSOMAL PROTEIN L27"/>
    <property type="match status" value="1"/>
</dbReference>
<dbReference type="Pfam" id="PF01016">
    <property type="entry name" value="Ribosomal_L27"/>
    <property type="match status" value="1"/>
</dbReference>
<dbReference type="PRINTS" id="PR00063">
    <property type="entry name" value="RIBOSOMALL27"/>
</dbReference>
<dbReference type="SUPFAM" id="SSF110324">
    <property type="entry name" value="Ribosomal L27 protein-like"/>
    <property type="match status" value="1"/>
</dbReference>
<dbReference type="PROSITE" id="PS00831">
    <property type="entry name" value="RIBOSOMAL_L27"/>
    <property type="match status" value="1"/>
</dbReference>
<sequence length="85" mass="9325">MAHKKGQGSTQNNRDSAGRRLGVKRFGSQFVRAGNIIVRQRGTKVHPGDNVGLGKDHTIYALIDGVVKFQQKDKNRKKVSVIPAS</sequence>
<feature type="chain" id="PRO_0000181098" description="Large ribosomal subunit protein bL27">
    <location>
        <begin position="1"/>
        <end position="85"/>
    </location>
</feature>
<feature type="region of interest" description="Disordered" evidence="2">
    <location>
        <begin position="1"/>
        <end position="23"/>
    </location>
</feature>
<organism>
    <name type="scientific">Helicobacter hepaticus (strain ATCC 51449 / 3B1)</name>
    <dbReference type="NCBI Taxonomy" id="235279"/>
    <lineage>
        <taxon>Bacteria</taxon>
        <taxon>Pseudomonadati</taxon>
        <taxon>Campylobacterota</taxon>
        <taxon>Epsilonproteobacteria</taxon>
        <taxon>Campylobacterales</taxon>
        <taxon>Helicobacteraceae</taxon>
        <taxon>Helicobacter</taxon>
    </lineage>
</organism>
<evidence type="ECO:0000255" key="1">
    <source>
        <dbReference type="HAMAP-Rule" id="MF_00539"/>
    </source>
</evidence>
<evidence type="ECO:0000256" key="2">
    <source>
        <dbReference type="SAM" id="MobiDB-lite"/>
    </source>
</evidence>
<evidence type="ECO:0000305" key="3"/>
<name>RL27_HELHP</name>
<accession>Q7VK83</accession>